<accession>A3NAT7</accession>
<evidence type="ECO:0000255" key="1">
    <source>
        <dbReference type="HAMAP-Rule" id="MF_00523"/>
    </source>
</evidence>
<dbReference type="EC" id="2.3.1.191" evidence="1"/>
<dbReference type="EMBL" id="CP000570">
    <property type="protein sequence ID" value="ABN84371.1"/>
    <property type="molecule type" value="Genomic_DNA"/>
</dbReference>
<dbReference type="RefSeq" id="WP_004521195.1">
    <property type="nucleotide sequence ID" value="NC_009074.1"/>
</dbReference>
<dbReference type="SMR" id="A3NAT7"/>
<dbReference type="KEGG" id="bpd:BURPS668_2426"/>
<dbReference type="HOGENOM" id="CLU_049865_0_1_4"/>
<dbReference type="UniPathway" id="UPA00973"/>
<dbReference type="GO" id="GO:0016020">
    <property type="term" value="C:membrane"/>
    <property type="evidence" value="ECO:0007669"/>
    <property type="project" value="GOC"/>
</dbReference>
<dbReference type="GO" id="GO:0016410">
    <property type="term" value="F:N-acyltransferase activity"/>
    <property type="evidence" value="ECO:0007669"/>
    <property type="project" value="InterPro"/>
</dbReference>
<dbReference type="GO" id="GO:0009245">
    <property type="term" value="P:lipid A biosynthetic process"/>
    <property type="evidence" value="ECO:0007669"/>
    <property type="project" value="UniProtKB-UniRule"/>
</dbReference>
<dbReference type="CDD" id="cd03352">
    <property type="entry name" value="LbH_LpxD"/>
    <property type="match status" value="1"/>
</dbReference>
<dbReference type="Gene3D" id="1.20.5.170">
    <property type="match status" value="1"/>
</dbReference>
<dbReference type="Gene3D" id="2.160.10.10">
    <property type="entry name" value="Hexapeptide repeat proteins"/>
    <property type="match status" value="1"/>
</dbReference>
<dbReference type="Gene3D" id="3.40.1390.10">
    <property type="entry name" value="MurE/MurF, N-terminal domain"/>
    <property type="match status" value="1"/>
</dbReference>
<dbReference type="HAMAP" id="MF_00523">
    <property type="entry name" value="LpxD"/>
    <property type="match status" value="1"/>
</dbReference>
<dbReference type="InterPro" id="IPR001451">
    <property type="entry name" value="Hexapep"/>
</dbReference>
<dbReference type="InterPro" id="IPR018357">
    <property type="entry name" value="Hexapep_transf_CS"/>
</dbReference>
<dbReference type="InterPro" id="IPR007691">
    <property type="entry name" value="LpxD"/>
</dbReference>
<dbReference type="InterPro" id="IPR011004">
    <property type="entry name" value="Trimer_LpxA-like_sf"/>
</dbReference>
<dbReference type="InterPro" id="IPR020573">
    <property type="entry name" value="UDP_GlcNAc_AcTrfase_non-rep"/>
</dbReference>
<dbReference type="NCBIfam" id="TIGR01853">
    <property type="entry name" value="lipid_A_lpxD"/>
    <property type="match status" value="1"/>
</dbReference>
<dbReference type="NCBIfam" id="NF002060">
    <property type="entry name" value="PRK00892.1"/>
    <property type="match status" value="1"/>
</dbReference>
<dbReference type="PANTHER" id="PTHR43378">
    <property type="entry name" value="UDP-3-O-ACYLGLUCOSAMINE N-ACYLTRANSFERASE"/>
    <property type="match status" value="1"/>
</dbReference>
<dbReference type="PANTHER" id="PTHR43378:SF2">
    <property type="entry name" value="UDP-3-O-ACYLGLUCOSAMINE N-ACYLTRANSFERASE 1, MITOCHONDRIAL-RELATED"/>
    <property type="match status" value="1"/>
</dbReference>
<dbReference type="Pfam" id="PF00132">
    <property type="entry name" value="Hexapep"/>
    <property type="match status" value="2"/>
</dbReference>
<dbReference type="Pfam" id="PF14602">
    <property type="entry name" value="Hexapep_2"/>
    <property type="match status" value="1"/>
</dbReference>
<dbReference type="Pfam" id="PF04613">
    <property type="entry name" value="LpxD"/>
    <property type="match status" value="1"/>
</dbReference>
<dbReference type="SUPFAM" id="SSF51161">
    <property type="entry name" value="Trimeric LpxA-like enzymes"/>
    <property type="match status" value="1"/>
</dbReference>
<dbReference type="PROSITE" id="PS00101">
    <property type="entry name" value="HEXAPEP_TRANSFERASES"/>
    <property type="match status" value="3"/>
</dbReference>
<sequence>MALTLEALAARFGGEIVGDGRCEVGALAPLDQAGPRQLAFLANPKYLAQVETTGAGAVLIAPGDLEKLGAAAHGRNFIVTPNPYAYFARVAQMFIDLAAPPRAAGVHPSATIDPAAQVAASAVIGPHVTVEAGAVIGERAQLDANVFVGRGTRIGDDSHLYPNVAIYHGCTLGPRAIVHSGAVIGSDGFGFAPDFVGEGDARTGAWVKIPQVGGVKVGPDVEIGANTTIDRGAMADTVIDECVKIDNLVQIGHNCRIGAYTVIAGCAGIAGSTTIGKHCMIGGAVGIAGHVTLGDYVIVTAKSGVSKSLPKAGIYTSAFPAVEHGDWNRSAALVRNLDKLRDRIKALETALAAREGDAGGA</sequence>
<comment type="function">
    <text evidence="1">Catalyzes the N-acylation of UDP-3-O-acylglucosamine using 3-hydroxyacyl-ACP as the acyl donor. Is involved in the biosynthesis of lipid A, a phosphorylated glycolipid that anchors the lipopolysaccharide to the outer membrane of the cell.</text>
</comment>
<comment type="catalytic activity">
    <reaction evidence="1">
        <text>a UDP-3-O-[(3R)-3-hydroxyacyl]-alpha-D-glucosamine + a (3R)-hydroxyacyl-[ACP] = a UDP-2-N,3-O-bis[(3R)-3-hydroxyacyl]-alpha-D-glucosamine + holo-[ACP] + H(+)</text>
        <dbReference type="Rhea" id="RHEA:53836"/>
        <dbReference type="Rhea" id="RHEA-COMP:9685"/>
        <dbReference type="Rhea" id="RHEA-COMP:9945"/>
        <dbReference type="ChEBI" id="CHEBI:15378"/>
        <dbReference type="ChEBI" id="CHEBI:64479"/>
        <dbReference type="ChEBI" id="CHEBI:78827"/>
        <dbReference type="ChEBI" id="CHEBI:137740"/>
        <dbReference type="ChEBI" id="CHEBI:137748"/>
        <dbReference type="EC" id="2.3.1.191"/>
    </reaction>
</comment>
<comment type="pathway">
    <text evidence="1">Bacterial outer membrane biogenesis; LPS lipid A biosynthesis.</text>
</comment>
<comment type="subunit">
    <text evidence="1">Homotrimer.</text>
</comment>
<comment type="similarity">
    <text evidence="1">Belongs to the transferase hexapeptide repeat family. LpxD subfamily.</text>
</comment>
<feature type="chain" id="PRO_1000050935" description="UDP-3-O-acylglucosamine N-acyltransferase">
    <location>
        <begin position="1"/>
        <end position="361"/>
    </location>
</feature>
<feature type="active site" description="Proton acceptor" evidence="1">
    <location>
        <position position="253"/>
    </location>
</feature>
<organism>
    <name type="scientific">Burkholderia pseudomallei (strain 668)</name>
    <dbReference type="NCBI Taxonomy" id="320373"/>
    <lineage>
        <taxon>Bacteria</taxon>
        <taxon>Pseudomonadati</taxon>
        <taxon>Pseudomonadota</taxon>
        <taxon>Betaproteobacteria</taxon>
        <taxon>Burkholderiales</taxon>
        <taxon>Burkholderiaceae</taxon>
        <taxon>Burkholderia</taxon>
        <taxon>pseudomallei group</taxon>
    </lineage>
</organism>
<reference key="1">
    <citation type="journal article" date="2010" name="Genome Biol. Evol.">
        <title>Continuing evolution of Burkholderia mallei through genome reduction and large-scale rearrangements.</title>
        <authorList>
            <person name="Losada L."/>
            <person name="Ronning C.M."/>
            <person name="DeShazer D."/>
            <person name="Woods D."/>
            <person name="Fedorova N."/>
            <person name="Kim H.S."/>
            <person name="Shabalina S.A."/>
            <person name="Pearson T.R."/>
            <person name="Brinkac L."/>
            <person name="Tan P."/>
            <person name="Nandi T."/>
            <person name="Crabtree J."/>
            <person name="Badger J."/>
            <person name="Beckstrom-Sternberg S."/>
            <person name="Saqib M."/>
            <person name="Schutzer S.E."/>
            <person name="Keim P."/>
            <person name="Nierman W.C."/>
        </authorList>
    </citation>
    <scope>NUCLEOTIDE SEQUENCE [LARGE SCALE GENOMIC DNA]</scope>
    <source>
        <strain>668</strain>
    </source>
</reference>
<protein>
    <recommendedName>
        <fullName evidence="1">UDP-3-O-acylglucosamine N-acyltransferase</fullName>
        <ecNumber evidence="1">2.3.1.191</ecNumber>
    </recommendedName>
</protein>
<keyword id="KW-0012">Acyltransferase</keyword>
<keyword id="KW-0441">Lipid A biosynthesis</keyword>
<keyword id="KW-0444">Lipid biosynthesis</keyword>
<keyword id="KW-0443">Lipid metabolism</keyword>
<keyword id="KW-0677">Repeat</keyword>
<keyword id="KW-0808">Transferase</keyword>
<gene>
    <name evidence="1" type="primary">lpxD</name>
    <name type="ordered locus">BURPS668_2426</name>
</gene>
<name>LPXD_BURP6</name>
<proteinExistence type="inferred from homology"/>